<protein>
    <recommendedName>
        <fullName evidence="1">Small ribosomal subunit protein uS4</fullName>
    </recommendedName>
    <alternativeName>
        <fullName evidence="3">30S ribosomal protein S4</fullName>
    </alternativeName>
</protein>
<dbReference type="EMBL" id="CP000084">
    <property type="protein sequence ID" value="AAZ21948.1"/>
    <property type="molecule type" value="Genomic_DNA"/>
</dbReference>
<dbReference type="RefSeq" id="WP_006996782.1">
    <property type="nucleotide sequence ID" value="NC_007205.1"/>
</dbReference>
<dbReference type="SMR" id="Q4FLJ0"/>
<dbReference type="STRING" id="335992.SAR11_1145"/>
<dbReference type="GeneID" id="66295639"/>
<dbReference type="KEGG" id="pub:SAR11_1145"/>
<dbReference type="eggNOG" id="COG0522">
    <property type="taxonomic scope" value="Bacteria"/>
</dbReference>
<dbReference type="HOGENOM" id="CLU_092403_0_0_5"/>
<dbReference type="OrthoDB" id="9803672at2"/>
<dbReference type="Proteomes" id="UP000002528">
    <property type="component" value="Chromosome"/>
</dbReference>
<dbReference type="GO" id="GO:0015935">
    <property type="term" value="C:small ribosomal subunit"/>
    <property type="evidence" value="ECO:0007669"/>
    <property type="project" value="InterPro"/>
</dbReference>
<dbReference type="GO" id="GO:0019843">
    <property type="term" value="F:rRNA binding"/>
    <property type="evidence" value="ECO:0007669"/>
    <property type="project" value="UniProtKB-UniRule"/>
</dbReference>
<dbReference type="GO" id="GO:0003735">
    <property type="term" value="F:structural constituent of ribosome"/>
    <property type="evidence" value="ECO:0007669"/>
    <property type="project" value="InterPro"/>
</dbReference>
<dbReference type="GO" id="GO:0042274">
    <property type="term" value="P:ribosomal small subunit biogenesis"/>
    <property type="evidence" value="ECO:0007669"/>
    <property type="project" value="TreeGrafter"/>
</dbReference>
<dbReference type="GO" id="GO:0006412">
    <property type="term" value="P:translation"/>
    <property type="evidence" value="ECO:0007669"/>
    <property type="project" value="UniProtKB-UniRule"/>
</dbReference>
<dbReference type="CDD" id="cd00165">
    <property type="entry name" value="S4"/>
    <property type="match status" value="1"/>
</dbReference>
<dbReference type="FunFam" id="3.10.290.10:FF:000001">
    <property type="entry name" value="30S ribosomal protein S4"/>
    <property type="match status" value="1"/>
</dbReference>
<dbReference type="Gene3D" id="1.10.1050.10">
    <property type="entry name" value="Ribosomal Protein S4 Delta 41, Chain A, domain 1"/>
    <property type="match status" value="1"/>
</dbReference>
<dbReference type="Gene3D" id="3.10.290.10">
    <property type="entry name" value="RNA-binding S4 domain"/>
    <property type="match status" value="1"/>
</dbReference>
<dbReference type="HAMAP" id="MF_01306_B">
    <property type="entry name" value="Ribosomal_uS4_B"/>
    <property type="match status" value="1"/>
</dbReference>
<dbReference type="InterPro" id="IPR022801">
    <property type="entry name" value="Ribosomal_uS4"/>
</dbReference>
<dbReference type="InterPro" id="IPR005709">
    <property type="entry name" value="Ribosomal_uS4_bac-type"/>
</dbReference>
<dbReference type="InterPro" id="IPR018079">
    <property type="entry name" value="Ribosomal_uS4_CS"/>
</dbReference>
<dbReference type="InterPro" id="IPR001912">
    <property type="entry name" value="Ribosomal_uS4_N"/>
</dbReference>
<dbReference type="InterPro" id="IPR002942">
    <property type="entry name" value="S4_RNA-bd"/>
</dbReference>
<dbReference type="InterPro" id="IPR036986">
    <property type="entry name" value="S4_RNA-bd_sf"/>
</dbReference>
<dbReference type="NCBIfam" id="NF003717">
    <property type="entry name" value="PRK05327.1"/>
    <property type="match status" value="1"/>
</dbReference>
<dbReference type="NCBIfam" id="TIGR01017">
    <property type="entry name" value="rpsD_bact"/>
    <property type="match status" value="1"/>
</dbReference>
<dbReference type="PANTHER" id="PTHR11831">
    <property type="entry name" value="30S 40S RIBOSOMAL PROTEIN"/>
    <property type="match status" value="1"/>
</dbReference>
<dbReference type="PANTHER" id="PTHR11831:SF4">
    <property type="entry name" value="SMALL RIBOSOMAL SUBUNIT PROTEIN US4M"/>
    <property type="match status" value="1"/>
</dbReference>
<dbReference type="Pfam" id="PF00163">
    <property type="entry name" value="Ribosomal_S4"/>
    <property type="match status" value="1"/>
</dbReference>
<dbReference type="Pfam" id="PF01479">
    <property type="entry name" value="S4"/>
    <property type="match status" value="1"/>
</dbReference>
<dbReference type="SMART" id="SM01390">
    <property type="entry name" value="Ribosomal_S4"/>
    <property type="match status" value="1"/>
</dbReference>
<dbReference type="SMART" id="SM00363">
    <property type="entry name" value="S4"/>
    <property type="match status" value="1"/>
</dbReference>
<dbReference type="SUPFAM" id="SSF55174">
    <property type="entry name" value="Alpha-L RNA-binding motif"/>
    <property type="match status" value="1"/>
</dbReference>
<dbReference type="PROSITE" id="PS00632">
    <property type="entry name" value="RIBOSOMAL_S4"/>
    <property type="match status" value="1"/>
</dbReference>
<dbReference type="PROSITE" id="PS50889">
    <property type="entry name" value="S4"/>
    <property type="match status" value="1"/>
</dbReference>
<name>RS4_PELUB</name>
<evidence type="ECO:0000255" key="1">
    <source>
        <dbReference type="HAMAP-Rule" id="MF_01306"/>
    </source>
</evidence>
<evidence type="ECO:0000256" key="2">
    <source>
        <dbReference type="SAM" id="MobiDB-lite"/>
    </source>
</evidence>
<evidence type="ECO:0000305" key="3"/>
<sequence>MTKRISAKHKIDRRLKINLWGRPKSPFNKRDYGPGQHGQGRKGKPSDYGIQLQAKQKLKGYYGNINERQFRNIYKKATMLKGDTGENLIGLLERRLDSVVYRARFSTTVFSARQLINHGHVRVNGKKVNIGSYVVKEEDIIEIRDKSKQLAIIDIALASKERETPEYINLDEKNKKVTFVRTPKFDEVPYPVIMEPNLVIEYYSR</sequence>
<keyword id="KW-1185">Reference proteome</keyword>
<keyword id="KW-0687">Ribonucleoprotein</keyword>
<keyword id="KW-0689">Ribosomal protein</keyword>
<keyword id="KW-0694">RNA-binding</keyword>
<keyword id="KW-0699">rRNA-binding</keyword>
<accession>Q4FLJ0</accession>
<reference key="1">
    <citation type="journal article" date="2005" name="Science">
        <title>Genome streamlining in a cosmopolitan oceanic bacterium.</title>
        <authorList>
            <person name="Giovannoni S.J."/>
            <person name="Tripp H.J."/>
            <person name="Givan S."/>
            <person name="Podar M."/>
            <person name="Vergin K.L."/>
            <person name="Baptista D."/>
            <person name="Bibbs L."/>
            <person name="Eads J."/>
            <person name="Richardson T.H."/>
            <person name="Noordewier M."/>
            <person name="Rappe M.S."/>
            <person name="Short J.M."/>
            <person name="Carrington J.C."/>
            <person name="Mathur E.J."/>
        </authorList>
    </citation>
    <scope>NUCLEOTIDE SEQUENCE [LARGE SCALE GENOMIC DNA]</scope>
    <source>
        <strain>HTCC1062</strain>
    </source>
</reference>
<gene>
    <name evidence="1" type="primary">rpsD</name>
    <name type="ordered locus">SAR11_1145</name>
</gene>
<feature type="chain" id="PRO_0000228908" description="Small ribosomal subunit protein uS4">
    <location>
        <begin position="1"/>
        <end position="205"/>
    </location>
</feature>
<feature type="domain" description="S4 RNA-binding" evidence="1">
    <location>
        <begin position="94"/>
        <end position="154"/>
    </location>
</feature>
<feature type="region of interest" description="Disordered" evidence="2">
    <location>
        <begin position="21"/>
        <end position="47"/>
    </location>
</feature>
<proteinExistence type="inferred from homology"/>
<organism>
    <name type="scientific">Pelagibacter ubique (strain HTCC1062)</name>
    <dbReference type="NCBI Taxonomy" id="335992"/>
    <lineage>
        <taxon>Bacteria</taxon>
        <taxon>Pseudomonadati</taxon>
        <taxon>Pseudomonadota</taxon>
        <taxon>Alphaproteobacteria</taxon>
        <taxon>Candidatus Pelagibacterales</taxon>
        <taxon>Candidatus Pelagibacteraceae</taxon>
        <taxon>Candidatus Pelagibacter</taxon>
    </lineage>
</organism>
<comment type="function">
    <text evidence="1">One of the primary rRNA binding proteins, it binds directly to 16S rRNA where it nucleates assembly of the body of the 30S subunit.</text>
</comment>
<comment type="function">
    <text evidence="1">With S5 and S12 plays an important role in translational accuracy.</text>
</comment>
<comment type="subunit">
    <text evidence="1">Part of the 30S ribosomal subunit. Contacts protein S5. The interaction surface between S4 and S5 is involved in control of translational fidelity.</text>
</comment>
<comment type="similarity">
    <text evidence="1">Belongs to the universal ribosomal protein uS4 family.</text>
</comment>